<protein>
    <recommendedName>
        <fullName evidence="4">BLOC-2 complex member HPS3</fullName>
    </recommendedName>
    <alternativeName>
        <fullName>Cocoa protein</fullName>
    </alternativeName>
    <alternativeName>
        <fullName>Hermansky-Pudlak syndrome 3 protein homolog</fullName>
    </alternativeName>
</protein>
<accession>Q91VB4</accession>
<accession>Q6GTD8</accession>
<accession>Q8VDX2</accession>
<accession>Q8VHT1</accession>
<gene>
    <name type="primary">Hps3</name>
    <name type="synonym">Coa</name>
</gene>
<feature type="chain" id="PRO_0000084051" description="BLOC-2 complex member HPS3">
    <location>
        <begin position="1"/>
        <end position="1002"/>
    </location>
</feature>
<feature type="region of interest" description="Disordered" evidence="2">
    <location>
        <begin position="218"/>
        <end position="239"/>
    </location>
</feature>
<feature type="sequence conflict" description="In Ref. 4; AAH20105." evidence="4" ref="4">
    <original>M</original>
    <variation>V</variation>
    <location>
        <position position="634"/>
    </location>
</feature>
<feature type="sequence conflict" description="In Ref. 1; AAK84214/AAK84181 and 4; AAH20105." evidence="4" ref="1 4">
    <original>T</original>
    <variation>A</variation>
    <location>
        <position position="891"/>
    </location>
</feature>
<organism>
    <name type="scientific">Mus musculus</name>
    <name type="common">Mouse</name>
    <dbReference type="NCBI Taxonomy" id="10090"/>
    <lineage>
        <taxon>Eukaryota</taxon>
        <taxon>Metazoa</taxon>
        <taxon>Chordata</taxon>
        <taxon>Craniata</taxon>
        <taxon>Vertebrata</taxon>
        <taxon>Euteleostomi</taxon>
        <taxon>Mammalia</taxon>
        <taxon>Eutheria</taxon>
        <taxon>Euarchontoglires</taxon>
        <taxon>Glires</taxon>
        <taxon>Rodentia</taxon>
        <taxon>Myomorpha</taxon>
        <taxon>Muroidea</taxon>
        <taxon>Muridae</taxon>
        <taxon>Murinae</taxon>
        <taxon>Mus</taxon>
        <taxon>Mus</taxon>
    </lineage>
</organism>
<sequence length="1002" mass="113182">MVRLYNLHPFGSQQVVPCQWEPEQVCCGGSDALFVAAGCKVEAFAVQGEELCRQRCAFSTLGRVLRMAYSEAGDYLVAIEEKNKTIFLRAYVNWRSKRSDNSRVCIRMVGHNVEASFCESFRDQMSIIEMPMSEAPLCFSCCPVKGDLLVGCTNKLVLFTLKYDIINEEFSILNFERSLIIHIDNITPVEISFCVGYVAVMSDLEVLLLKLESDPIHGESVDHHPQETSNPLKEAEGVSNETSQLESEDFVICLKPMELIGEKCEQSGISVKLESTGLEDEKVKYLRVRHLLYRRFAPDISSYVLSDNIKLHSLQLLPIHQSGFHPDENDLSPKKEMPNLFCFFSLPHVGYLYMVVKSVELMSVYWYPEKSQQAVLTPQFLHVITSQSLQCFTVRCSAAVAHEEDLYMDTTLKACPPVSMDVCALRIQLFIGLKAICHFKNHIILLTKAEPEAIPERRESPKKLISRKDASVRSGTPHVAEAAWNLYLVNTTAPVQLYKEMVDYSNSYKTVKTESCLHLLSEAHLLVRAALMDGSQLEPAEKAELLEAFKESCGHLGDCYSRLTTEQSHLALPYYKMSGLSLAEVLARVDWTEESESQKYERGLVFYINHSLYENLDEELSKELAAKVAQIFHMAEPKQLPHVLSSPSMKNIDPLTALHYLRKLDSCGVSPVLVTLTKAAVALKMGDLDMYRNEMKSHSEMKLVYGFILEPRLLIQQWKGQIVPTELAIDLKETQPGLLVASVLGLQKNDKIGIVETDSFFKVLCGKDEDAVPQLLIDFWEAQLVACLPNVVLEELFFKLISQYVWRLSERRCPDTVPLRTAEDLINACSHYGLVNPWVHVLTTSDSLADKNYTDDLLKLQSLICSPSLDVASIIPFLEPLSEDTVAGLSTHALCHTRLQEYEQCIDTLLERCPEAVIAYANQELKEDHWILWWKKLLPELCQRVKSGGERSHLHLSLLKETLSVIAVGLDLRDFLNVLPEDGAAAFFLPYLLFCSRKKSLT</sequence>
<comment type="function">
    <text evidence="3">Involved in early stages of melanosome biogenesis and maturation.</text>
</comment>
<comment type="subunit">
    <text evidence="1">Component of the biogenesis of lysosome-related organelles complex-2 (or BLOC2) composed of HPS3, HPS5 and HPS6. Interacts with HPS5 and HPS6.</text>
</comment>
<comment type="subcellular location">
    <subcellularLocation>
        <location evidence="3">Cytoplasm</location>
    </subcellularLocation>
    <subcellularLocation>
        <location evidence="1">Cytoplasm</location>
        <location evidence="1">Cytosol</location>
    </subcellularLocation>
</comment>
<comment type="tissue specificity">
    <text evidence="3">Found in heart, brain, spleen, liver, lung, kidney and testis.</text>
</comment>
<comment type="disease">
    <text evidence="3">Defects in Hps3 are the cause of the cocoa (coa) mutant, which is characterized by hypopigmentation and platelet dysfunction (PubMed:11707070).</text>
</comment>
<keyword id="KW-0015">Albinism</keyword>
<keyword id="KW-0963">Cytoplasm</keyword>
<keyword id="KW-1185">Reference proteome</keyword>
<proteinExistence type="evidence at transcript level"/>
<reference key="1">
    <citation type="journal article" date="2001" name="Mol. Genet. Metab.">
        <title>Characterization of the murine gene corresponding to human Hermansky-Pudlak syndrome type 3: exclusion of the subtle gray (sut) locus.</title>
        <authorList>
            <person name="Huizing M."/>
            <person name="Anikster Y."/>
            <person name="White J.G."/>
            <person name="Gahl W.A."/>
        </authorList>
    </citation>
    <scope>NUCLEOTIDE SEQUENCE [GENOMIC DNA / MRNA]</scope>
    <source>
        <strain>BALB/cJ</strain>
        <strain>C3H/HeSNJ</strain>
    </source>
</reference>
<reference key="2">
    <citation type="journal article" date="2001" name="Genomics">
        <title>The gene mutated in cocoa mice, carrying a defect of organelle biogenesis, is a homologue of the human Hermansky-Pudlak syndrome-3 gene.</title>
        <authorList>
            <person name="Suzuki T."/>
            <person name="Li W."/>
            <person name="Zhang Q."/>
            <person name="Novak E.K."/>
            <person name="Sviderskaya E.V."/>
            <person name="Wilson A."/>
            <person name="Bennett D.C."/>
            <person name="Roe B.A."/>
            <person name="Swank R.T."/>
            <person name="Spritz R.A."/>
        </authorList>
    </citation>
    <scope>NUCLEOTIDE SEQUENCE [GENOMIC DNA / MRNA]</scope>
    <scope>DISEASE</scope>
    <scope>SUBCELLULAR LOCATION</scope>
    <scope>FUNCTION</scope>
    <scope>TISSUE SPECIFICITY</scope>
    <source>
        <strain>129/SvJ</strain>
    </source>
</reference>
<reference key="3">
    <citation type="submission" date="2005-07" db="EMBL/GenBank/DDBJ databases">
        <authorList>
            <person name="Mural R.J."/>
            <person name="Adams M.D."/>
            <person name="Myers E.W."/>
            <person name="Smith H.O."/>
            <person name="Venter J.C."/>
        </authorList>
    </citation>
    <scope>NUCLEOTIDE SEQUENCE [LARGE SCALE GENOMIC DNA]</scope>
</reference>
<reference key="4">
    <citation type="journal article" date="2004" name="Genome Res.">
        <title>The status, quality, and expansion of the NIH full-length cDNA project: the Mammalian Gene Collection (MGC).</title>
        <authorList>
            <consortium name="The MGC Project Team"/>
        </authorList>
    </citation>
    <scope>NUCLEOTIDE SEQUENCE [LARGE SCALE MRNA]</scope>
</reference>
<evidence type="ECO:0000250" key="1">
    <source>
        <dbReference type="UniProtKB" id="Q969F9"/>
    </source>
</evidence>
<evidence type="ECO:0000256" key="2">
    <source>
        <dbReference type="SAM" id="MobiDB-lite"/>
    </source>
</evidence>
<evidence type="ECO:0000269" key="3">
    <source>
    </source>
</evidence>
<evidence type="ECO:0000305" key="4"/>
<name>HPS3_MOUSE</name>
<dbReference type="EMBL" id="AF396703">
    <property type="protein sequence ID" value="AAK84214.1"/>
    <property type="molecule type" value="Genomic_DNA"/>
</dbReference>
<dbReference type="EMBL" id="AF396700">
    <property type="protein sequence ID" value="AAK84214.1"/>
    <property type="status" value="JOINED"/>
    <property type="molecule type" value="Genomic_DNA"/>
</dbReference>
<dbReference type="EMBL" id="AF396701">
    <property type="protein sequence ID" value="AAK84214.1"/>
    <property type="status" value="JOINED"/>
    <property type="molecule type" value="Genomic_DNA"/>
</dbReference>
<dbReference type="EMBL" id="AF396702">
    <property type="protein sequence ID" value="AAK84214.1"/>
    <property type="status" value="JOINED"/>
    <property type="molecule type" value="Genomic_DNA"/>
</dbReference>
<dbReference type="EMBL" id="AF393747">
    <property type="protein sequence ID" value="AAK84181.1"/>
    <property type="molecule type" value="mRNA"/>
</dbReference>
<dbReference type="EMBL" id="AF396648">
    <property type="protein sequence ID" value="AAL37710.1"/>
    <property type="molecule type" value="Genomic_DNA"/>
</dbReference>
<dbReference type="EMBL" id="AF396632">
    <property type="protein sequence ID" value="AAL37710.1"/>
    <property type="status" value="JOINED"/>
    <property type="molecule type" value="Genomic_DNA"/>
</dbReference>
<dbReference type="EMBL" id="AF396633">
    <property type="protein sequence ID" value="AAL37710.1"/>
    <property type="status" value="JOINED"/>
    <property type="molecule type" value="Genomic_DNA"/>
</dbReference>
<dbReference type="EMBL" id="AF396634">
    <property type="protein sequence ID" value="AAL37710.1"/>
    <property type="status" value="JOINED"/>
    <property type="molecule type" value="Genomic_DNA"/>
</dbReference>
<dbReference type="EMBL" id="AF396635">
    <property type="protein sequence ID" value="AAL37710.1"/>
    <property type="status" value="JOINED"/>
    <property type="molecule type" value="Genomic_DNA"/>
</dbReference>
<dbReference type="EMBL" id="AF396636">
    <property type="protein sequence ID" value="AAL37710.1"/>
    <property type="status" value="JOINED"/>
    <property type="molecule type" value="Genomic_DNA"/>
</dbReference>
<dbReference type="EMBL" id="AF396637">
    <property type="protein sequence ID" value="AAL37710.1"/>
    <property type="status" value="JOINED"/>
    <property type="molecule type" value="Genomic_DNA"/>
</dbReference>
<dbReference type="EMBL" id="AF396638">
    <property type="protein sequence ID" value="AAL37710.1"/>
    <property type="status" value="JOINED"/>
    <property type="molecule type" value="Genomic_DNA"/>
</dbReference>
<dbReference type="EMBL" id="AF396639">
    <property type="protein sequence ID" value="AAL37710.1"/>
    <property type="status" value="JOINED"/>
    <property type="molecule type" value="Genomic_DNA"/>
</dbReference>
<dbReference type="EMBL" id="AF396640">
    <property type="protein sequence ID" value="AAL37710.1"/>
    <property type="status" value="JOINED"/>
    <property type="molecule type" value="Genomic_DNA"/>
</dbReference>
<dbReference type="EMBL" id="AF396641">
    <property type="protein sequence ID" value="AAL37710.1"/>
    <property type="status" value="JOINED"/>
    <property type="molecule type" value="Genomic_DNA"/>
</dbReference>
<dbReference type="EMBL" id="AF396642">
    <property type="protein sequence ID" value="AAL37710.1"/>
    <property type="status" value="JOINED"/>
    <property type="molecule type" value="Genomic_DNA"/>
</dbReference>
<dbReference type="EMBL" id="AF396643">
    <property type="protein sequence ID" value="AAL37710.1"/>
    <property type="status" value="JOINED"/>
    <property type="molecule type" value="Genomic_DNA"/>
</dbReference>
<dbReference type="EMBL" id="AF396644">
    <property type="protein sequence ID" value="AAL37710.1"/>
    <property type="status" value="JOINED"/>
    <property type="molecule type" value="Genomic_DNA"/>
</dbReference>
<dbReference type="EMBL" id="AF396645">
    <property type="protein sequence ID" value="AAL37710.1"/>
    <property type="status" value="JOINED"/>
    <property type="molecule type" value="Genomic_DNA"/>
</dbReference>
<dbReference type="EMBL" id="AF396646">
    <property type="protein sequence ID" value="AAL37710.1"/>
    <property type="status" value="JOINED"/>
    <property type="molecule type" value="Genomic_DNA"/>
</dbReference>
<dbReference type="EMBL" id="AF396647">
    <property type="protein sequence ID" value="AAL37710.1"/>
    <property type="status" value="JOINED"/>
    <property type="molecule type" value="Genomic_DNA"/>
</dbReference>
<dbReference type="EMBL" id="AF393780">
    <property type="protein sequence ID" value="AAL84109.1"/>
    <property type="molecule type" value="mRNA"/>
</dbReference>
<dbReference type="EMBL" id="CH466530">
    <property type="protein sequence ID" value="EDL34889.1"/>
    <property type="molecule type" value="Genomic_DNA"/>
</dbReference>
<dbReference type="EMBL" id="BC058235">
    <property type="protein sequence ID" value="AAH58235.1"/>
    <property type="molecule type" value="mRNA"/>
</dbReference>
<dbReference type="EMBL" id="BC020105">
    <property type="protein sequence ID" value="AAH20105.1"/>
    <property type="molecule type" value="mRNA"/>
</dbReference>
<dbReference type="CCDS" id="CCDS17260.1"/>
<dbReference type="RefSeq" id="NP_001139795.1">
    <property type="nucleotide sequence ID" value="NM_001146323.1"/>
</dbReference>
<dbReference type="RefSeq" id="NP_542365.3">
    <property type="nucleotide sequence ID" value="NM_080634.4"/>
</dbReference>
<dbReference type="BioGRID" id="198799">
    <property type="interactions" value="1"/>
</dbReference>
<dbReference type="ComplexPortal" id="CPX-5084">
    <property type="entry name" value="BLOC-2 complex"/>
</dbReference>
<dbReference type="CORUM" id="Q91VB4"/>
<dbReference type="FunCoup" id="Q91VB4">
    <property type="interactions" value="1749"/>
</dbReference>
<dbReference type="STRING" id="10090.ENSMUSP00000012580"/>
<dbReference type="iPTMnet" id="Q91VB4"/>
<dbReference type="PhosphoSitePlus" id="Q91VB4"/>
<dbReference type="PaxDb" id="10090-ENSMUSP00000012580"/>
<dbReference type="ProteomicsDB" id="273168"/>
<dbReference type="Pumba" id="Q91VB4"/>
<dbReference type="Antibodypedia" id="33559">
    <property type="antibodies" value="166 antibodies from 29 providers"/>
</dbReference>
<dbReference type="Ensembl" id="ENSMUST00000012580.13">
    <property type="protein sequence ID" value="ENSMUSP00000012580.7"/>
    <property type="gene ID" value="ENSMUSG00000027615.15"/>
</dbReference>
<dbReference type="GeneID" id="12807"/>
<dbReference type="KEGG" id="mmu:12807"/>
<dbReference type="UCSC" id="uc008osf.2">
    <property type="organism name" value="mouse"/>
</dbReference>
<dbReference type="AGR" id="MGI:2153839"/>
<dbReference type="CTD" id="84343"/>
<dbReference type="MGI" id="MGI:2153839">
    <property type="gene designation" value="Hps3"/>
</dbReference>
<dbReference type="VEuPathDB" id="HostDB:ENSMUSG00000027615"/>
<dbReference type="eggNOG" id="ENOG502QRQB">
    <property type="taxonomic scope" value="Eukaryota"/>
</dbReference>
<dbReference type="GeneTree" id="ENSGT00390000015458"/>
<dbReference type="HOGENOM" id="CLU_011989_0_0_1"/>
<dbReference type="InParanoid" id="Q91VB4"/>
<dbReference type="OMA" id="CIPYYKM"/>
<dbReference type="OrthoDB" id="10255480at2759"/>
<dbReference type="PhylomeDB" id="Q91VB4"/>
<dbReference type="TreeFam" id="TF324432"/>
<dbReference type="BioGRID-ORCS" id="12807">
    <property type="hits" value="4 hits in 78 CRISPR screens"/>
</dbReference>
<dbReference type="ChiTaRS" id="Hps3">
    <property type="organism name" value="mouse"/>
</dbReference>
<dbReference type="PRO" id="PR:Q91VB4"/>
<dbReference type="Proteomes" id="UP000000589">
    <property type="component" value="Chromosome 3"/>
</dbReference>
<dbReference type="RNAct" id="Q91VB4">
    <property type="molecule type" value="protein"/>
</dbReference>
<dbReference type="Bgee" id="ENSMUSG00000027615">
    <property type="expression patterns" value="Expressed in granulocyte and 235 other cell types or tissues"/>
</dbReference>
<dbReference type="ExpressionAtlas" id="Q91VB4">
    <property type="expression patterns" value="baseline and differential"/>
</dbReference>
<dbReference type="GO" id="GO:0031084">
    <property type="term" value="C:BLOC-2 complex"/>
    <property type="evidence" value="ECO:0000266"/>
    <property type="project" value="ComplexPortal"/>
</dbReference>
<dbReference type="GO" id="GO:0005737">
    <property type="term" value="C:cytoplasm"/>
    <property type="evidence" value="ECO:0000314"/>
    <property type="project" value="MGI"/>
</dbReference>
<dbReference type="GO" id="GO:0005829">
    <property type="term" value="C:cytosol"/>
    <property type="evidence" value="ECO:0007669"/>
    <property type="project" value="UniProtKB-SubCell"/>
</dbReference>
<dbReference type="GO" id="GO:0005769">
    <property type="term" value="C:early endosome"/>
    <property type="evidence" value="ECO:0000303"/>
    <property type="project" value="ComplexPortal"/>
</dbReference>
<dbReference type="GO" id="GO:0046907">
    <property type="term" value="P:intracellular transport"/>
    <property type="evidence" value="ECO:0000303"/>
    <property type="project" value="ComplexPortal"/>
</dbReference>
<dbReference type="GO" id="GO:1903232">
    <property type="term" value="P:melanosome assembly"/>
    <property type="evidence" value="ECO:0000303"/>
    <property type="project" value="ComplexPortal"/>
</dbReference>
<dbReference type="GO" id="GO:0043473">
    <property type="term" value="P:pigmentation"/>
    <property type="evidence" value="ECO:0000315"/>
    <property type="project" value="MGI"/>
</dbReference>
<dbReference type="GO" id="GO:0060155">
    <property type="term" value="P:platelet dense granule organization"/>
    <property type="evidence" value="ECO:0000303"/>
    <property type="project" value="ComplexPortal"/>
</dbReference>
<dbReference type="InterPro" id="IPR017216">
    <property type="entry name" value="HPS3"/>
</dbReference>
<dbReference type="InterPro" id="IPR029438">
    <property type="entry name" value="HPS3_C"/>
</dbReference>
<dbReference type="InterPro" id="IPR029437">
    <property type="entry name" value="HPS3_N"/>
</dbReference>
<dbReference type="PANTHER" id="PTHR28633:SF1">
    <property type="entry name" value="BLOC-2 COMPLEX MEMBER HPS3"/>
    <property type="match status" value="1"/>
</dbReference>
<dbReference type="PANTHER" id="PTHR28633">
    <property type="entry name" value="HERMANSKY-PUDLAK SYNDROME 3 PROTEIN"/>
    <property type="match status" value="1"/>
</dbReference>
<dbReference type="Pfam" id="PF14763">
    <property type="entry name" value="HPS3_C"/>
    <property type="match status" value="1"/>
</dbReference>
<dbReference type="Pfam" id="PF14761">
    <property type="entry name" value="HPS3_N"/>
    <property type="match status" value="1"/>
</dbReference>
<dbReference type="PIRSF" id="PIRSF037473">
    <property type="entry name" value="BLOC-2_complex_Hps3"/>
    <property type="match status" value="1"/>
</dbReference>